<sequence>MIKDVIKKSEEKMNKTINSLNSELATMKAGRANPTMLDRIQVEYYGSMCPLNQVANVSSPEPRLLVITPWEKPMLKEIEKAILKSDLGINPNNDGTIIRLLVPELTEETRKNLVKNVKKVGEQAKVAIRSIRKDANDKVKNFKKEGTITEDEMKKGEDDIQKVTDKFVKEIDTIVAAKEKEIMSI</sequence>
<protein>
    <recommendedName>
        <fullName evidence="1">Ribosome-recycling factor</fullName>
        <shortName evidence="1">RRF</shortName>
    </recommendedName>
    <alternativeName>
        <fullName evidence="1">Ribosome-releasing factor</fullName>
    </alternativeName>
</protein>
<reference key="1">
    <citation type="journal article" date="2002" name="Proc. Natl. Acad. Sci. U.S.A.">
        <title>Complete genome sequence of Clostridium perfringens, an anaerobic flesh-eater.</title>
        <authorList>
            <person name="Shimizu T."/>
            <person name="Ohtani K."/>
            <person name="Hirakawa H."/>
            <person name="Ohshima K."/>
            <person name="Yamashita A."/>
            <person name="Shiba T."/>
            <person name="Ogasawara N."/>
            <person name="Hattori M."/>
            <person name="Kuhara S."/>
            <person name="Hayashi H."/>
        </authorList>
    </citation>
    <scope>NUCLEOTIDE SEQUENCE [LARGE SCALE GENOMIC DNA]</scope>
    <source>
        <strain>13 / Type A</strain>
    </source>
</reference>
<reference key="2">
    <citation type="journal article" date="1995" name="J. Bacteriol.">
        <title>Rapid expansion of the physical and genetic map of the chromosome of Clostridium perfringens CPN50.</title>
        <authorList>
            <person name="Katayama S."/>
            <person name="Dupuy B."/>
            <person name="Garnier T."/>
            <person name="Cole S.T."/>
        </authorList>
    </citation>
    <scope>NUCLEOTIDE SEQUENCE [GENOMIC DNA] OF 46-177</scope>
    <source>
        <strain>CPN50</strain>
    </source>
</reference>
<name>RRF_CLOPE</name>
<dbReference type="EMBL" id="BA000016">
    <property type="protein sequence ID" value="BAB81403.1"/>
    <property type="molecule type" value="Genomic_DNA"/>
</dbReference>
<dbReference type="EMBL" id="X86481">
    <property type="protein sequence ID" value="CAA60206.1"/>
    <property type="molecule type" value="Genomic_DNA"/>
</dbReference>
<dbReference type="RefSeq" id="WP_003459781.1">
    <property type="nucleotide sequence ID" value="NC_003366.1"/>
</dbReference>
<dbReference type="SMR" id="Q46293"/>
<dbReference type="STRING" id="195102.gene:10490961"/>
<dbReference type="GeneID" id="93001765"/>
<dbReference type="KEGG" id="cpe:CPE1697"/>
<dbReference type="HOGENOM" id="CLU_073981_2_0_9"/>
<dbReference type="Proteomes" id="UP000000818">
    <property type="component" value="Chromosome"/>
</dbReference>
<dbReference type="GO" id="GO:0005737">
    <property type="term" value="C:cytoplasm"/>
    <property type="evidence" value="ECO:0007669"/>
    <property type="project" value="UniProtKB-SubCell"/>
</dbReference>
<dbReference type="GO" id="GO:0043023">
    <property type="term" value="F:ribosomal large subunit binding"/>
    <property type="evidence" value="ECO:0007669"/>
    <property type="project" value="TreeGrafter"/>
</dbReference>
<dbReference type="GO" id="GO:0006415">
    <property type="term" value="P:translational termination"/>
    <property type="evidence" value="ECO:0007669"/>
    <property type="project" value="UniProtKB-UniRule"/>
</dbReference>
<dbReference type="CDD" id="cd00520">
    <property type="entry name" value="RRF"/>
    <property type="match status" value="1"/>
</dbReference>
<dbReference type="FunFam" id="1.10.132.20:FF:000001">
    <property type="entry name" value="Ribosome-recycling factor"/>
    <property type="match status" value="1"/>
</dbReference>
<dbReference type="FunFam" id="3.30.1360.40:FF:000001">
    <property type="entry name" value="Ribosome-recycling factor"/>
    <property type="match status" value="1"/>
</dbReference>
<dbReference type="Gene3D" id="3.30.1360.40">
    <property type="match status" value="1"/>
</dbReference>
<dbReference type="Gene3D" id="1.10.132.20">
    <property type="entry name" value="Ribosome-recycling factor"/>
    <property type="match status" value="1"/>
</dbReference>
<dbReference type="HAMAP" id="MF_00040">
    <property type="entry name" value="RRF"/>
    <property type="match status" value="1"/>
</dbReference>
<dbReference type="InterPro" id="IPR002661">
    <property type="entry name" value="Ribosome_recyc_fac"/>
</dbReference>
<dbReference type="InterPro" id="IPR023584">
    <property type="entry name" value="Ribosome_recyc_fac_dom"/>
</dbReference>
<dbReference type="InterPro" id="IPR036191">
    <property type="entry name" value="RRF_sf"/>
</dbReference>
<dbReference type="NCBIfam" id="TIGR00496">
    <property type="entry name" value="frr"/>
    <property type="match status" value="1"/>
</dbReference>
<dbReference type="PANTHER" id="PTHR20982:SF3">
    <property type="entry name" value="MITOCHONDRIAL RIBOSOME RECYCLING FACTOR PSEUDO 1"/>
    <property type="match status" value="1"/>
</dbReference>
<dbReference type="PANTHER" id="PTHR20982">
    <property type="entry name" value="RIBOSOME RECYCLING FACTOR"/>
    <property type="match status" value="1"/>
</dbReference>
<dbReference type="Pfam" id="PF01765">
    <property type="entry name" value="RRF"/>
    <property type="match status" value="1"/>
</dbReference>
<dbReference type="SUPFAM" id="SSF55194">
    <property type="entry name" value="Ribosome recycling factor, RRF"/>
    <property type="match status" value="1"/>
</dbReference>
<proteinExistence type="inferred from homology"/>
<organism>
    <name type="scientific">Clostridium perfringens (strain 13 / Type A)</name>
    <dbReference type="NCBI Taxonomy" id="195102"/>
    <lineage>
        <taxon>Bacteria</taxon>
        <taxon>Bacillati</taxon>
        <taxon>Bacillota</taxon>
        <taxon>Clostridia</taxon>
        <taxon>Eubacteriales</taxon>
        <taxon>Clostridiaceae</taxon>
        <taxon>Clostridium</taxon>
    </lineage>
</organism>
<evidence type="ECO:0000255" key="1">
    <source>
        <dbReference type="HAMAP-Rule" id="MF_00040"/>
    </source>
</evidence>
<accession>Q46293</accession>
<comment type="function">
    <text evidence="1">Responsible for the release of ribosomes from messenger RNA at the termination of protein biosynthesis. May increase the efficiency of translation by recycling ribosomes from one round of translation to another.</text>
</comment>
<comment type="subcellular location">
    <subcellularLocation>
        <location evidence="1">Cytoplasm</location>
    </subcellularLocation>
</comment>
<comment type="similarity">
    <text evidence="1">Belongs to the RRF family.</text>
</comment>
<gene>
    <name evidence="1" type="primary">frr</name>
    <name type="synonym">rrf</name>
    <name type="ordered locus">CPE1697</name>
</gene>
<keyword id="KW-0963">Cytoplasm</keyword>
<keyword id="KW-0648">Protein biosynthesis</keyword>
<keyword id="KW-1185">Reference proteome</keyword>
<feature type="chain" id="PRO_0000167445" description="Ribosome-recycling factor">
    <location>
        <begin position="1"/>
        <end position="185"/>
    </location>
</feature>